<proteinExistence type="predicted"/>
<reference key="1">
    <citation type="journal article" date="1997" name="Nature">
        <title>The complete genome sequence of the hyperthermophilic, sulphate-reducing archaeon Archaeoglobus fulgidus.</title>
        <authorList>
            <person name="Klenk H.-P."/>
            <person name="Clayton R.A."/>
            <person name="Tomb J.-F."/>
            <person name="White O."/>
            <person name="Nelson K.E."/>
            <person name="Ketchum K.A."/>
            <person name="Dodson R.J."/>
            <person name="Gwinn M.L."/>
            <person name="Hickey E.K."/>
            <person name="Peterson J.D."/>
            <person name="Richardson D.L."/>
            <person name="Kerlavage A.R."/>
            <person name="Graham D.E."/>
            <person name="Kyrpides N.C."/>
            <person name="Fleischmann R.D."/>
            <person name="Quackenbush J."/>
            <person name="Lee N.H."/>
            <person name="Sutton G.G."/>
            <person name="Gill S.R."/>
            <person name="Kirkness E.F."/>
            <person name="Dougherty B.A."/>
            <person name="McKenney K."/>
            <person name="Adams M.D."/>
            <person name="Loftus B.J."/>
            <person name="Peterson S.N."/>
            <person name="Reich C.I."/>
            <person name="McNeil L.K."/>
            <person name="Badger J.H."/>
            <person name="Glodek A."/>
            <person name="Zhou L."/>
            <person name="Overbeek R."/>
            <person name="Gocayne J.D."/>
            <person name="Weidman J.F."/>
            <person name="McDonald L.A."/>
            <person name="Utterback T.R."/>
            <person name="Cotton M.D."/>
            <person name="Spriggs T."/>
            <person name="Artiach P."/>
            <person name="Kaine B.P."/>
            <person name="Sykes S.M."/>
            <person name="Sadow P.W."/>
            <person name="D'Andrea K.P."/>
            <person name="Bowman C."/>
            <person name="Fujii C."/>
            <person name="Garland S.A."/>
            <person name="Mason T.M."/>
            <person name="Olsen G.J."/>
            <person name="Fraser C.M."/>
            <person name="Smith H.O."/>
            <person name="Woese C.R."/>
            <person name="Venter J.C."/>
        </authorList>
    </citation>
    <scope>NUCLEOTIDE SEQUENCE [LARGE SCALE GENOMIC DNA]</scope>
    <source>
        <strain>ATCC 49558 / DSM 4304 / JCM 9628 / NBRC 100126 / VC-16</strain>
    </source>
</reference>
<gene>
    <name type="ordered locus">AF_0712</name>
</gene>
<accession>O29546</accession>
<protein>
    <recommendedName>
        <fullName>Uncharacterized protein AF_0712</fullName>
    </recommendedName>
</protein>
<comment type="subcellular location">
    <subcellularLocation>
        <location evidence="2">Cell membrane</location>
        <topology evidence="2">Multi-pass membrane protein</topology>
    </subcellularLocation>
</comment>
<sequence>MRRLAILLSLAGIADSSYLLLSEAVPCPTGVCASISVFSLPPFVPALLGLCWFVLSIVVFTAGVNRALLTFWRFSGVFGESFLGTYAVLHGYFCPYCFTAYGIGIVVVAISEKLYG</sequence>
<organism>
    <name type="scientific">Archaeoglobus fulgidus (strain ATCC 49558 / DSM 4304 / JCM 9628 / NBRC 100126 / VC-16)</name>
    <dbReference type="NCBI Taxonomy" id="224325"/>
    <lineage>
        <taxon>Archaea</taxon>
        <taxon>Methanobacteriati</taxon>
        <taxon>Methanobacteriota</taxon>
        <taxon>Archaeoglobi</taxon>
        <taxon>Archaeoglobales</taxon>
        <taxon>Archaeoglobaceae</taxon>
        <taxon>Archaeoglobus</taxon>
    </lineage>
</organism>
<feature type="chain" id="PRO_0000127912" description="Uncharacterized protein AF_0712">
    <location>
        <begin position="1"/>
        <end position="116"/>
    </location>
</feature>
<feature type="transmembrane region" description="Helical" evidence="1">
    <location>
        <begin position="5"/>
        <end position="27"/>
    </location>
</feature>
<feature type="transmembrane region" description="Helical" evidence="1">
    <location>
        <begin position="42"/>
        <end position="64"/>
    </location>
</feature>
<feature type="transmembrane region" description="Helical" evidence="1">
    <location>
        <begin position="88"/>
        <end position="110"/>
    </location>
</feature>
<name>Y712_ARCFU</name>
<evidence type="ECO:0000255" key="1"/>
<evidence type="ECO:0000305" key="2"/>
<keyword id="KW-1003">Cell membrane</keyword>
<keyword id="KW-0472">Membrane</keyword>
<keyword id="KW-1185">Reference proteome</keyword>
<keyword id="KW-0812">Transmembrane</keyword>
<keyword id="KW-1133">Transmembrane helix</keyword>
<dbReference type="EMBL" id="AE000782">
    <property type="protein sequence ID" value="AAB90528.1"/>
    <property type="molecule type" value="Genomic_DNA"/>
</dbReference>
<dbReference type="PIR" id="H69338">
    <property type="entry name" value="H69338"/>
</dbReference>
<dbReference type="RefSeq" id="WP_010878215.1">
    <property type="nucleotide sequence ID" value="NC_000917.1"/>
</dbReference>
<dbReference type="STRING" id="224325.AF_0712"/>
<dbReference type="PaxDb" id="224325-AF_0712"/>
<dbReference type="DNASU" id="1483930"/>
<dbReference type="EnsemblBacteria" id="AAB90528">
    <property type="protein sequence ID" value="AAB90528"/>
    <property type="gene ID" value="AF_0712"/>
</dbReference>
<dbReference type="KEGG" id="afu:AF_0712"/>
<dbReference type="eggNOG" id="arCOG03749">
    <property type="taxonomic scope" value="Archaea"/>
</dbReference>
<dbReference type="HOGENOM" id="CLU_2140078_0_0_2"/>
<dbReference type="OrthoDB" id="384304at2157"/>
<dbReference type="Proteomes" id="UP000002199">
    <property type="component" value="Chromosome"/>
</dbReference>
<dbReference type="GO" id="GO:0005886">
    <property type="term" value="C:plasma membrane"/>
    <property type="evidence" value="ECO:0007669"/>
    <property type="project" value="UniProtKB-SubCell"/>
</dbReference>